<evidence type="ECO:0000255" key="1">
    <source>
        <dbReference type="HAMAP-Rule" id="MF_00539"/>
    </source>
</evidence>
<evidence type="ECO:0000256" key="2">
    <source>
        <dbReference type="SAM" id="MobiDB-lite"/>
    </source>
</evidence>
<evidence type="ECO:0000305" key="3"/>
<name>RL27_BORGP</name>
<proteinExistence type="inferred from homology"/>
<organism>
    <name type="scientific">Borrelia garinii subsp. bavariensis (strain ATCC BAA-2496 / DSM 23469 / PBi)</name>
    <name type="common">Borreliella bavariensis</name>
    <dbReference type="NCBI Taxonomy" id="290434"/>
    <lineage>
        <taxon>Bacteria</taxon>
        <taxon>Pseudomonadati</taxon>
        <taxon>Spirochaetota</taxon>
        <taxon>Spirochaetia</taxon>
        <taxon>Spirochaetales</taxon>
        <taxon>Borreliaceae</taxon>
        <taxon>Borreliella</taxon>
    </lineage>
</organism>
<feature type="chain" id="PRO_0000181052" description="Large ribosomal subunit protein bL27">
    <location>
        <begin position="1"/>
        <end position="81"/>
    </location>
</feature>
<feature type="region of interest" description="Disordered" evidence="2">
    <location>
        <begin position="1"/>
        <end position="23"/>
    </location>
</feature>
<feature type="compositionally biased region" description="Polar residues" evidence="2">
    <location>
        <begin position="1"/>
        <end position="11"/>
    </location>
</feature>
<reference key="1">
    <citation type="journal article" date="2004" name="Nucleic Acids Res.">
        <title>Comparative analysis of the Borrelia garinii genome.</title>
        <authorList>
            <person name="Gloeckner G."/>
            <person name="Lehmann R."/>
            <person name="Romualdi A."/>
            <person name="Pradella S."/>
            <person name="Schulte-Spechtel U."/>
            <person name="Schilhabel M."/>
            <person name="Wilske B."/>
            <person name="Suehnel J."/>
            <person name="Platzer M."/>
        </authorList>
    </citation>
    <scope>NUCLEOTIDE SEQUENCE [LARGE SCALE GENOMIC DNA]</scope>
    <source>
        <strain>ATCC BAA-2496 / DSM 23469 / PBi</strain>
    </source>
</reference>
<dbReference type="EMBL" id="CP000013">
    <property type="protein sequence ID" value="AAU07627.1"/>
    <property type="molecule type" value="Genomic_DNA"/>
</dbReference>
<dbReference type="RefSeq" id="WP_011194073.1">
    <property type="nucleotide sequence ID" value="NC_006156.1"/>
</dbReference>
<dbReference type="SMR" id="Q65ZZ4"/>
<dbReference type="GeneID" id="45161579"/>
<dbReference type="KEGG" id="bga:BG0804"/>
<dbReference type="eggNOG" id="COG0211">
    <property type="taxonomic scope" value="Bacteria"/>
</dbReference>
<dbReference type="HOGENOM" id="CLU_095424_4_1_12"/>
<dbReference type="OrthoDB" id="9803474at2"/>
<dbReference type="Proteomes" id="UP000002276">
    <property type="component" value="Chromosome"/>
</dbReference>
<dbReference type="GO" id="GO:0022625">
    <property type="term" value="C:cytosolic large ribosomal subunit"/>
    <property type="evidence" value="ECO:0007669"/>
    <property type="project" value="TreeGrafter"/>
</dbReference>
<dbReference type="GO" id="GO:0003735">
    <property type="term" value="F:structural constituent of ribosome"/>
    <property type="evidence" value="ECO:0007669"/>
    <property type="project" value="InterPro"/>
</dbReference>
<dbReference type="GO" id="GO:0006412">
    <property type="term" value="P:translation"/>
    <property type="evidence" value="ECO:0007669"/>
    <property type="project" value="UniProtKB-UniRule"/>
</dbReference>
<dbReference type="FunFam" id="2.40.50.100:FF:000020">
    <property type="entry name" value="50S ribosomal protein L27"/>
    <property type="match status" value="1"/>
</dbReference>
<dbReference type="Gene3D" id="2.40.50.100">
    <property type="match status" value="1"/>
</dbReference>
<dbReference type="HAMAP" id="MF_00539">
    <property type="entry name" value="Ribosomal_bL27"/>
    <property type="match status" value="1"/>
</dbReference>
<dbReference type="InterPro" id="IPR001684">
    <property type="entry name" value="Ribosomal_bL27"/>
</dbReference>
<dbReference type="NCBIfam" id="TIGR00062">
    <property type="entry name" value="L27"/>
    <property type="match status" value="1"/>
</dbReference>
<dbReference type="PANTHER" id="PTHR15893:SF0">
    <property type="entry name" value="LARGE RIBOSOMAL SUBUNIT PROTEIN BL27M"/>
    <property type="match status" value="1"/>
</dbReference>
<dbReference type="PANTHER" id="PTHR15893">
    <property type="entry name" value="RIBOSOMAL PROTEIN L27"/>
    <property type="match status" value="1"/>
</dbReference>
<dbReference type="Pfam" id="PF01016">
    <property type="entry name" value="Ribosomal_L27"/>
    <property type="match status" value="1"/>
</dbReference>
<dbReference type="PRINTS" id="PR00063">
    <property type="entry name" value="RIBOSOMALL27"/>
</dbReference>
<dbReference type="SUPFAM" id="SSF110324">
    <property type="entry name" value="Ribosomal L27 protein-like"/>
    <property type="match status" value="1"/>
</dbReference>
<sequence>MATSKSGGSSKNGRDSISKRLGVKRSGGQFVKAEEIIVRQRGTKFHKGRNVGLGRDYTLFALSSGKVEFKTLKGKKYVNII</sequence>
<accession>Q65ZZ4</accession>
<protein>
    <recommendedName>
        <fullName evidence="1">Large ribosomal subunit protein bL27</fullName>
    </recommendedName>
    <alternativeName>
        <fullName evidence="3">50S ribosomal protein L27</fullName>
    </alternativeName>
</protein>
<comment type="similarity">
    <text evidence="1">Belongs to the bacterial ribosomal protein bL27 family.</text>
</comment>
<keyword id="KW-0687">Ribonucleoprotein</keyword>
<keyword id="KW-0689">Ribosomal protein</keyword>
<gene>
    <name evidence="1" type="primary">rpmA</name>
    <name type="ordered locus">BG0804</name>
</gene>